<protein>
    <recommendedName>
        <fullName evidence="1">Cell division protein ZapA</fullName>
    </recommendedName>
    <alternativeName>
        <fullName evidence="1">Z ring-associated protein ZapA</fullName>
    </alternativeName>
</protein>
<accession>A7MR94</accession>
<gene>
    <name evidence="1" type="primary">zapA</name>
    <name type="ordered locus">ESA_00418</name>
</gene>
<feature type="chain" id="PRO_0000345639" description="Cell division protein ZapA">
    <location>
        <begin position="1"/>
        <end position="109"/>
    </location>
</feature>
<feature type="coiled-coil region" evidence="1">
    <location>
        <begin position="21"/>
        <end position="99"/>
    </location>
</feature>
<dbReference type="EMBL" id="CP000783">
    <property type="protein sequence ID" value="ABU75715.1"/>
    <property type="molecule type" value="Genomic_DNA"/>
</dbReference>
<dbReference type="RefSeq" id="WP_004385658.1">
    <property type="nucleotide sequence ID" value="NC_009778.1"/>
</dbReference>
<dbReference type="SMR" id="A7MR94"/>
<dbReference type="GeneID" id="92804973"/>
<dbReference type="KEGG" id="esa:ESA_00418"/>
<dbReference type="HOGENOM" id="CLU_116623_3_0_6"/>
<dbReference type="Proteomes" id="UP000000260">
    <property type="component" value="Chromosome"/>
</dbReference>
<dbReference type="GO" id="GO:0032153">
    <property type="term" value="C:cell division site"/>
    <property type="evidence" value="ECO:0007669"/>
    <property type="project" value="TreeGrafter"/>
</dbReference>
<dbReference type="GO" id="GO:0030428">
    <property type="term" value="C:cell septum"/>
    <property type="evidence" value="ECO:0007669"/>
    <property type="project" value="TreeGrafter"/>
</dbReference>
<dbReference type="GO" id="GO:0005829">
    <property type="term" value="C:cytosol"/>
    <property type="evidence" value="ECO:0007669"/>
    <property type="project" value="TreeGrafter"/>
</dbReference>
<dbReference type="GO" id="GO:0005886">
    <property type="term" value="C:plasma membrane"/>
    <property type="evidence" value="ECO:0007669"/>
    <property type="project" value="UniProtKB-UniRule"/>
</dbReference>
<dbReference type="GO" id="GO:0000917">
    <property type="term" value="P:division septum assembly"/>
    <property type="evidence" value="ECO:0007669"/>
    <property type="project" value="UniProtKB-KW"/>
</dbReference>
<dbReference type="GO" id="GO:0043093">
    <property type="term" value="P:FtsZ-dependent cytokinesis"/>
    <property type="evidence" value="ECO:0007669"/>
    <property type="project" value="TreeGrafter"/>
</dbReference>
<dbReference type="GO" id="GO:0000921">
    <property type="term" value="P:septin ring assembly"/>
    <property type="evidence" value="ECO:0007669"/>
    <property type="project" value="TreeGrafter"/>
</dbReference>
<dbReference type="FunFam" id="1.20.5.50:FF:000001">
    <property type="entry name" value="Cell division protein ZapA"/>
    <property type="match status" value="1"/>
</dbReference>
<dbReference type="FunFam" id="3.30.160.880:FF:000001">
    <property type="entry name" value="Cell division protein ZapA"/>
    <property type="match status" value="1"/>
</dbReference>
<dbReference type="Gene3D" id="1.20.5.50">
    <property type="match status" value="1"/>
</dbReference>
<dbReference type="Gene3D" id="3.30.160.880">
    <property type="entry name" value="Cell division protein ZapA protomer, N-terminal domain"/>
    <property type="match status" value="1"/>
</dbReference>
<dbReference type="HAMAP" id="MF_02012">
    <property type="entry name" value="ZapA_type1"/>
    <property type="match status" value="1"/>
</dbReference>
<dbReference type="InterPro" id="IPR007838">
    <property type="entry name" value="Cell_div_ZapA-like"/>
</dbReference>
<dbReference type="InterPro" id="IPR036192">
    <property type="entry name" value="Cell_div_ZapA-like_sf"/>
</dbReference>
<dbReference type="InterPro" id="IPR023771">
    <property type="entry name" value="Cell_div_ZapA_eubact"/>
</dbReference>
<dbReference type="InterPro" id="IPR042233">
    <property type="entry name" value="Cell_div_ZapA_N"/>
</dbReference>
<dbReference type="NCBIfam" id="NF008209">
    <property type="entry name" value="PRK10972.1"/>
    <property type="match status" value="1"/>
</dbReference>
<dbReference type="PANTHER" id="PTHR34981">
    <property type="entry name" value="CELL DIVISION PROTEIN ZAPA"/>
    <property type="match status" value="1"/>
</dbReference>
<dbReference type="PANTHER" id="PTHR34981:SF1">
    <property type="entry name" value="CELL DIVISION PROTEIN ZAPA"/>
    <property type="match status" value="1"/>
</dbReference>
<dbReference type="Pfam" id="PF05164">
    <property type="entry name" value="ZapA"/>
    <property type="match status" value="1"/>
</dbReference>
<dbReference type="SUPFAM" id="SSF102829">
    <property type="entry name" value="Cell division protein ZapA-like"/>
    <property type="match status" value="1"/>
</dbReference>
<sequence>MSAQPVDIQIFGRSLRVNCPPEQRDALNQAADELNQRLQDLKVRTRVTNTEQLVFIAALNICYELAQEKVKTRDYAANMEQRIRMLQQTIEQALLEQGRISERAEPKFE</sequence>
<organism>
    <name type="scientific">Cronobacter sakazakii (strain ATCC BAA-894)</name>
    <name type="common">Enterobacter sakazakii</name>
    <dbReference type="NCBI Taxonomy" id="290339"/>
    <lineage>
        <taxon>Bacteria</taxon>
        <taxon>Pseudomonadati</taxon>
        <taxon>Pseudomonadota</taxon>
        <taxon>Gammaproteobacteria</taxon>
        <taxon>Enterobacterales</taxon>
        <taxon>Enterobacteriaceae</taxon>
        <taxon>Cronobacter</taxon>
    </lineage>
</organism>
<evidence type="ECO:0000255" key="1">
    <source>
        <dbReference type="HAMAP-Rule" id="MF_02012"/>
    </source>
</evidence>
<comment type="function">
    <text evidence="1">Activator of cell division through the inhibition of FtsZ GTPase activity, therefore promoting FtsZ assembly into bundles of protofilaments necessary for the formation of the division Z ring. It is recruited early at mid-cell but it is not essential for cell division.</text>
</comment>
<comment type="subunit">
    <text evidence="1">Homodimer. Interacts with FtsZ.</text>
</comment>
<comment type="subcellular location">
    <subcellularLocation>
        <location evidence="1">Cytoplasm</location>
    </subcellularLocation>
    <text evidence="1">Localizes at mid-cell.</text>
</comment>
<comment type="similarity">
    <text evidence="1">Belongs to the ZapA family. Type 1 subfamily.</text>
</comment>
<name>ZAPA_CROS8</name>
<proteinExistence type="inferred from homology"/>
<reference key="1">
    <citation type="journal article" date="2010" name="PLoS ONE">
        <title>Genome sequence of Cronobacter sakazakii BAA-894 and comparative genomic hybridization analysis with other Cronobacter species.</title>
        <authorList>
            <person name="Kucerova E."/>
            <person name="Clifton S.W."/>
            <person name="Xia X.Q."/>
            <person name="Long F."/>
            <person name="Porwollik S."/>
            <person name="Fulton L."/>
            <person name="Fronick C."/>
            <person name="Minx P."/>
            <person name="Kyung K."/>
            <person name="Warren W."/>
            <person name="Fulton R."/>
            <person name="Feng D."/>
            <person name="Wollam A."/>
            <person name="Shah N."/>
            <person name="Bhonagiri V."/>
            <person name="Nash W.E."/>
            <person name="Hallsworth-Pepin K."/>
            <person name="Wilson R.K."/>
            <person name="McClelland M."/>
            <person name="Forsythe S.J."/>
        </authorList>
    </citation>
    <scope>NUCLEOTIDE SEQUENCE [LARGE SCALE GENOMIC DNA]</scope>
    <source>
        <strain>ATCC BAA-894</strain>
    </source>
</reference>
<keyword id="KW-0131">Cell cycle</keyword>
<keyword id="KW-0132">Cell division</keyword>
<keyword id="KW-0175">Coiled coil</keyword>
<keyword id="KW-0963">Cytoplasm</keyword>
<keyword id="KW-1185">Reference proteome</keyword>
<keyword id="KW-0717">Septation</keyword>